<proteinExistence type="inferred from homology"/>
<name>RL4_STRU0</name>
<reference key="1">
    <citation type="journal article" date="2009" name="BMC Genomics">
        <title>Evidence for niche adaptation in the genome of the bovine pathogen Streptococcus uberis.</title>
        <authorList>
            <person name="Ward P.N."/>
            <person name="Holden M.T.G."/>
            <person name="Leigh J.A."/>
            <person name="Lennard N."/>
            <person name="Bignell A."/>
            <person name="Barron A."/>
            <person name="Clark L."/>
            <person name="Quail M.A."/>
            <person name="Woodward J."/>
            <person name="Barrell B.G."/>
            <person name="Egan S.A."/>
            <person name="Field T.R."/>
            <person name="Maskell D."/>
            <person name="Kehoe M."/>
            <person name="Dowson C.G."/>
            <person name="Chanter N."/>
            <person name="Whatmore A.M."/>
            <person name="Bentley S.D."/>
            <person name="Parkhill J."/>
        </authorList>
    </citation>
    <scope>NUCLEOTIDE SEQUENCE [LARGE SCALE GENOMIC DNA]</scope>
    <source>
        <strain>ATCC BAA-854 / 0140J</strain>
    </source>
</reference>
<keyword id="KW-1185">Reference proteome</keyword>
<keyword id="KW-0687">Ribonucleoprotein</keyword>
<keyword id="KW-0689">Ribosomal protein</keyword>
<keyword id="KW-0694">RNA-binding</keyword>
<keyword id="KW-0699">rRNA-binding</keyword>
<sequence>MANVKLFDQTGKEVSSVELNDAIFGIEPNESVVFDVVISQRASLRQGTHAVKNRSAVSGGGRKPWRQKGTGRARQGSIRSPQWRGGGVVFGPTPRSYGYKLPQKVRRLALKSVYSAKVAEDKFVAVEGLSFAAPKTAEFAKVLSALSIDSKVLVIVEEGNEFAALSARNLPNVKVATATTASVLDIVNSDKLLVTKEAISTIEEVLA</sequence>
<evidence type="ECO:0000255" key="1">
    <source>
        <dbReference type="HAMAP-Rule" id="MF_01328"/>
    </source>
</evidence>
<evidence type="ECO:0000256" key="2">
    <source>
        <dbReference type="SAM" id="MobiDB-lite"/>
    </source>
</evidence>
<evidence type="ECO:0000305" key="3"/>
<gene>
    <name evidence="1" type="primary">rplD</name>
    <name type="ordered locus">SUB0069</name>
</gene>
<feature type="chain" id="PRO_1000166028" description="Large ribosomal subunit protein uL4">
    <location>
        <begin position="1"/>
        <end position="207"/>
    </location>
</feature>
<feature type="region of interest" description="Disordered" evidence="2">
    <location>
        <begin position="49"/>
        <end position="78"/>
    </location>
</feature>
<comment type="function">
    <text evidence="1">One of the primary rRNA binding proteins, this protein initially binds near the 5'-end of the 23S rRNA. It is important during the early stages of 50S assembly. It makes multiple contacts with different domains of the 23S rRNA in the assembled 50S subunit and ribosome.</text>
</comment>
<comment type="function">
    <text evidence="1">Forms part of the polypeptide exit tunnel.</text>
</comment>
<comment type="subunit">
    <text evidence="1">Part of the 50S ribosomal subunit.</text>
</comment>
<comment type="similarity">
    <text evidence="1">Belongs to the universal ribosomal protein uL4 family.</text>
</comment>
<organism>
    <name type="scientific">Streptococcus uberis (strain ATCC BAA-854 / 0140J)</name>
    <dbReference type="NCBI Taxonomy" id="218495"/>
    <lineage>
        <taxon>Bacteria</taxon>
        <taxon>Bacillati</taxon>
        <taxon>Bacillota</taxon>
        <taxon>Bacilli</taxon>
        <taxon>Lactobacillales</taxon>
        <taxon>Streptococcaceae</taxon>
        <taxon>Streptococcus</taxon>
    </lineage>
</organism>
<accession>B9DSV1</accession>
<protein>
    <recommendedName>
        <fullName evidence="1">Large ribosomal subunit protein uL4</fullName>
    </recommendedName>
    <alternativeName>
        <fullName evidence="3">50S ribosomal protein L4</fullName>
    </alternativeName>
</protein>
<dbReference type="EMBL" id="AM946015">
    <property type="protein sequence ID" value="CAR40441.1"/>
    <property type="molecule type" value="Genomic_DNA"/>
</dbReference>
<dbReference type="RefSeq" id="WP_012657634.1">
    <property type="nucleotide sequence ID" value="NC_012004.1"/>
</dbReference>
<dbReference type="SMR" id="B9DSV1"/>
<dbReference type="STRING" id="218495.SUB0069"/>
<dbReference type="GeneID" id="93825295"/>
<dbReference type="KEGG" id="sub:SUB0069"/>
<dbReference type="eggNOG" id="COG0088">
    <property type="taxonomic scope" value="Bacteria"/>
</dbReference>
<dbReference type="HOGENOM" id="CLU_041575_5_2_9"/>
<dbReference type="OrthoDB" id="9803201at2"/>
<dbReference type="Proteomes" id="UP000000449">
    <property type="component" value="Chromosome"/>
</dbReference>
<dbReference type="GO" id="GO:1990904">
    <property type="term" value="C:ribonucleoprotein complex"/>
    <property type="evidence" value="ECO:0007669"/>
    <property type="project" value="UniProtKB-KW"/>
</dbReference>
<dbReference type="GO" id="GO:0005840">
    <property type="term" value="C:ribosome"/>
    <property type="evidence" value="ECO:0007669"/>
    <property type="project" value="UniProtKB-KW"/>
</dbReference>
<dbReference type="GO" id="GO:0019843">
    <property type="term" value="F:rRNA binding"/>
    <property type="evidence" value="ECO:0007669"/>
    <property type="project" value="UniProtKB-UniRule"/>
</dbReference>
<dbReference type="GO" id="GO:0003735">
    <property type="term" value="F:structural constituent of ribosome"/>
    <property type="evidence" value="ECO:0007669"/>
    <property type="project" value="InterPro"/>
</dbReference>
<dbReference type="GO" id="GO:0006412">
    <property type="term" value="P:translation"/>
    <property type="evidence" value="ECO:0007669"/>
    <property type="project" value="UniProtKB-UniRule"/>
</dbReference>
<dbReference type="FunFam" id="3.40.1370.10:FF:000003">
    <property type="entry name" value="50S ribosomal protein L4"/>
    <property type="match status" value="1"/>
</dbReference>
<dbReference type="Gene3D" id="3.40.1370.10">
    <property type="match status" value="1"/>
</dbReference>
<dbReference type="HAMAP" id="MF_01328_B">
    <property type="entry name" value="Ribosomal_uL4_B"/>
    <property type="match status" value="1"/>
</dbReference>
<dbReference type="InterPro" id="IPR002136">
    <property type="entry name" value="Ribosomal_uL4"/>
</dbReference>
<dbReference type="InterPro" id="IPR013005">
    <property type="entry name" value="Ribosomal_uL4-like"/>
</dbReference>
<dbReference type="InterPro" id="IPR023574">
    <property type="entry name" value="Ribosomal_uL4_dom_sf"/>
</dbReference>
<dbReference type="NCBIfam" id="TIGR03953">
    <property type="entry name" value="rplD_bact"/>
    <property type="match status" value="1"/>
</dbReference>
<dbReference type="PANTHER" id="PTHR10746">
    <property type="entry name" value="50S RIBOSOMAL PROTEIN L4"/>
    <property type="match status" value="1"/>
</dbReference>
<dbReference type="PANTHER" id="PTHR10746:SF6">
    <property type="entry name" value="LARGE RIBOSOMAL SUBUNIT PROTEIN UL4M"/>
    <property type="match status" value="1"/>
</dbReference>
<dbReference type="Pfam" id="PF00573">
    <property type="entry name" value="Ribosomal_L4"/>
    <property type="match status" value="1"/>
</dbReference>
<dbReference type="SUPFAM" id="SSF52166">
    <property type="entry name" value="Ribosomal protein L4"/>
    <property type="match status" value="1"/>
</dbReference>